<name>DNLJ_STRTD</name>
<gene>
    <name evidence="1" type="primary">ligA</name>
    <name type="ordered locus">STER_1513</name>
</gene>
<dbReference type="EC" id="6.5.1.2" evidence="1"/>
<dbReference type="EMBL" id="CP000419">
    <property type="protein sequence ID" value="ABJ66666.1"/>
    <property type="status" value="ALT_INIT"/>
    <property type="molecule type" value="Genomic_DNA"/>
</dbReference>
<dbReference type="RefSeq" id="WP_023909862.1">
    <property type="nucleotide sequence ID" value="NC_008532.1"/>
</dbReference>
<dbReference type="SMR" id="Q03JF6"/>
<dbReference type="KEGG" id="ste:STER_1513"/>
<dbReference type="HOGENOM" id="CLU_007764_2_1_9"/>
<dbReference type="GO" id="GO:0005829">
    <property type="term" value="C:cytosol"/>
    <property type="evidence" value="ECO:0007669"/>
    <property type="project" value="TreeGrafter"/>
</dbReference>
<dbReference type="GO" id="GO:0003677">
    <property type="term" value="F:DNA binding"/>
    <property type="evidence" value="ECO:0007669"/>
    <property type="project" value="InterPro"/>
</dbReference>
<dbReference type="GO" id="GO:0003911">
    <property type="term" value="F:DNA ligase (NAD+) activity"/>
    <property type="evidence" value="ECO:0007669"/>
    <property type="project" value="UniProtKB-UniRule"/>
</dbReference>
<dbReference type="GO" id="GO:0046872">
    <property type="term" value="F:metal ion binding"/>
    <property type="evidence" value="ECO:0007669"/>
    <property type="project" value="UniProtKB-KW"/>
</dbReference>
<dbReference type="GO" id="GO:0006281">
    <property type="term" value="P:DNA repair"/>
    <property type="evidence" value="ECO:0007669"/>
    <property type="project" value="UniProtKB-KW"/>
</dbReference>
<dbReference type="GO" id="GO:0006260">
    <property type="term" value="P:DNA replication"/>
    <property type="evidence" value="ECO:0007669"/>
    <property type="project" value="UniProtKB-KW"/>
</dbReference>
<dbReference type="CDD" id="cd17748">
    <property type="entry name" value="BRCT_DNA_ligase_like"/>
    <property type="match status" value="1"/>
</dbReference>
<dbReference type="CDD" id="cd00114">
    <property type="entry name" value="LIGANc"/>
    <property type="match status" value="1"/>
</dbReference>
<dbReference type="FunFam" id="1.10.150.20:FF:000006">
    <property type="entry name" value="DNA ligase"/>
    <property type="match status" value="1"/>
</dbReference>
<dbReference type="FunFam" id="1.10.150.20:FF:000007">
    <property type="entry name" value="DNA ligase"/>
    <property type="match status" value="1"/>
</dbReference>
<dbReference type="FunFam" id="1.10.287.610:FF:000002">
    <property type="entry name" value="DNA ligase"/>
    <property type="match status" value="1"/>
</dbReference>
<dbReference type="FunFam" id="2.40.50.140:FF:000012">
    <property type="entry name" value="DNA ligase"/>
    <property type="match status" value="1"/>
</dbReference>
<dbReference type="FunFam" id="3.30.470.30:FF:000001">
    <property type="entry name" value="DNA ligase"/>
    <property type="match status" value="1"/>
</dbReference>
<dbReference type="Gene3D" id="6.20.10.30">
    <property type="match status" value="1"/>
</dbReference>
<dbReference type="Gene3D" id="1.10.150.20">
    <property type="entry name" value="5' to 3' exonuclease, C-terminal subdomain"/>
    <property type="match status" value="2"/>
</dbReference>
<dbReference type="Gene3D" id="3.40.50.10190">
    <property type="entry name" value="BRCT domain"/>
    <property type="match status" value="1"/>
</dbReference>
<dbReference type="Gene3D" id="3.30.470.30">
    <property type="entry name" value="DNA ligase/mRNA capping enzyme"/>
    <property type="match status" value="1"/>
</dbReference>
<dbReference type="Gene3D" id="1.10.287.610">
    <property type="entry name" value="Helix hairpin bin"/>
    <property type="match status" value="1"/>
</dbReference>
<dbReference type="Gene3D" id="2.40.50.140">
    <property type="entry name" value="Nucleic acid-binding proteins"/>
    <property type="match status" value="1"/>
</dbReference>
<dbReference type="HAMAP" id="MF_01588">
    <property type="entry name" value="DNA_ligase_A"/>
    <property type="match status" value="1"/>
</dbReference>
<dbReference type="InterPro" id="IPR001357">
    <property type="entry name" value="BRCT_dom"/>
</dbReference>
<dbReference type="InterPro" id="IPR036420">
    <property type="entry name" value="BRCT_dom_sf"/>
</dbReference>
<dbReference type="InterPro" id="IPR041663">
    <property type="entry name" value="DisA/LigA_HHH"/>
</dbReference>
<dbReference type="InterPro" id="IPR001679">
    <property type="entry name" value="DNA_ligase"/>
</dbReference>
<dbReference type="InterPro" id="IPR018239">
    <property type="entry name" value="DNA_ligase_AS"/>
</dbReference>
<dbReference type="InterPro" id="IPR033136">
    <property type="entry name" value="DNA_ligase_CS"/>
</dbReference>
<dbReference type="InterPro" id="IPR013839">
    <property type="entry name" value="DNAligase_adenylation"/>
</dbReference>
<dbReference type="InterPro" id="IPR013840">
    <property type="entry name" value="DNAligase_N"/>
</dbReference>
<dbReference type="InterPro" id="IPR003583">
    <property type="entry name" value="Hlx-hairpin-Hlx_DNA-bd_motif"/>
</dbReference>
<dbReference type="InterPro" id="IPR012340">
    <property type="entry name" value="NA-bd_OB-fold"/>
</dbReference>
<dbReference type="InterPro" id="IPR004150">
    <property type="entry name" value="NAD_DNA_ligase_OB"/>
</dbReference>
<dbReference type="InterPro" id="IPR010994">
    <property type="entry name" value="RuvA_2-like"/>
</dbReference>
<dbReference type="InterPro" id="IPR004149">
    <property type="entry name" value="Znf_DNAligase_C4"/>
</dbReference>
<dbReference type="NCBIfam" id="TIGR00575">
    <property type="entry name" value="dnlj"/>
    <property type="match status" value="1"/>
</dbReference>
<dbReference type="NCBIfam" id="NF005932">
    <property type="entry name" value="PRK07956.1"/>
    <property type="match status" value="1"/>
</dbReference>
<dbReference type="PANTHER" id="PTHR23389">
    <property type="entry name" value="CHROMOSOME TRANSMISSION FIDELITY FACTOR 18"/>
    <property type="match status" value="1"/>
</dbReference>
<dbReference type="PANTHER" id="PTHR23389:SF9">
    <property type="entry name" value="DNA LIGASE"/>
    <property type="match status" value="1"/>
</dbReference>
<dbReference type="Pfam" id="PF00533">
    <property type="entry name" value="BRCT"/>
    <property type="match status" value="1"/>
</dbReference>
<dbReference type="Pfam" id="PF01653">
    <property type="entry name" value="DNA_ligase_aden"/>
    <property type="match status" value="1"/>
</dbReference>
<dbReference type="Pfam" id="PF03120">
    <property type="entry name" value="DNA_ligase_OB"/>
    <property type="match status" value="1"/>
</dbReference>
<dbReference type="Pfam" id="PF03119">
    <property type="entry name" value="DNA_ligase_ZBD"/>
    <property type="match status" value="1"/>
</dbReference>
<dbReference type="Pfam" id="PF12826">
    <property type="entry name" value="HHH_2"/>
    <property type="match status" value="1"/>
</dbReference>
<dbReference type="Pfam" id="PF14520">
    <property type="entry name" value="HHH_5"/>
    <property type="match status" value="1"/>
</dbReference>
<dbReference type="PIRSF" id="PIRSF001604">
    <property type="entry name" value="LigA"/>
    <property type="match status" value="1"/>
</dbReference>
<dbReference type="SMART" id="SM00292">
    <property type="entry name" value="BRCT"/>
    <property type="match status" value="1"/>
</dbReference>
<dbReference type="SMART" id="SM00278">
    <property type="entry name" value="HhH1"/>
    <property type="match status" value="3"/>
</dbReference>
<dbReference type="SMART" id="SM00532">
    <property type="entry name" value="LIGANc"/>
    <property type="match status" value="1"/>
</dbReference>
<dbReference type="SUPFAM" id="SSF52113">
    <property type="entry name" value="BRCT domain"/>
    <property type="match status" value="1"/>
</dbReference>
<dbReference type="SUPFAM" id="SSF56091">
    <property type="entry name" value="DNA ligase/mRNA capping enzyme, catalytic domain"/>
    <property type="match status" value="1"/>
</dbReference>
<dbReference type="SUPFAM" id="SSF50249">
    <property type="entry name" value="Nucleic acid-binding proteins"/>
    <property type="match status" value="1"/>
</dbReference>
<dbReference type="SUPFAM" id="SSF47781">
    <property type="entry name" value="RuvA domain 2-like"/>
    <property type="match status" value="1"/>
</dbReference>
<dbReference type="PROSITE" id="PS50172">
    <property type="entry name" value="BRCT"/>
    <property type="match status" value="1"/>
</dbReference>
<dbReference type="PROSITE" id="PS01055">
    <property type="entry name" value="DNA_LIGASE_N1"/>
    <property type="match status" value="1"/>
</dbReference>
<dbReference type="PROSITE" id="PS01056">
    <property type="entry name" value="DNA_LIGASE_N2"/>
    <property type="match status" value="1"/>
</dbReference>
<protein>
    <recommendedName>
        <fullName evidence="1">DNA ligase</fullName>
        <ecNumber evidence="1">6.5.1.2</ecNumber>
    </recommendedName>
    <alternativeName>
        <fullName evidence="1">Polydeoxyribonucleotide synthase [NAD(+)]</fullName>
    </alternativeName>
</protein>
<reference key="1">
    <citation type="journal article" date="2006" name="Proc. Natl. Acad. Sci. U.S.A.">
        <title>Comparative genomics of the lactic acid bacteria.</title>
        <authorList>
            <person name="Makarova K.S."/>
            <person name="Slesarev A."/>
            <person name="Wolf Y.I."/>
            <person name="Sorokin A."/>
            <person name="Mirkin B."/>
            <person name="Koonin E.V."/>
            <person name="Pavlov A."/>
            <person name="Pavlova N."/>
            <person name="Karamychev V."/>
            <person name="Polouchine N."/>
            <person name="Shakhova V."/>
            <person name="Grigoriev I."/>
            <person name="Lou Y."/>
            <person name="Rohksar D."/>
            <person name="Lucas S."/>
            <person name="Huang K."/>
            <person name="Goodstein D.M."/>
            <person name="Hawkins T."/>
            <person name="Plengvidhya V."/>
            <person name="Welker D."/>
            <person name="Hughes J."/>
            <person name="Goh Y."/>
            <person name="Benson A."/>
            <person name="Baldwin K."/>
            <person name="Lee J.-H."/>
            <person name="Diaz-Muniz I."/>
            <person name="Dosti B."/>
            <person name="Smeianov V."/>
            <person name="Wechter W."/>
            <person name="Barabote R."/>
            <person name="Lorca G."/>
            <person name="Altermann E."/>
            <person name="Barrangou R."/>
            <person name="Ganesan B."/>
            <person name="Xie Y."/>
            <person name="Rawsthorne H."/>
            <person name="Tamir D."/>
            <person name="Parker C."/>
            <person name="Breidt F."/>
            <person name="Broadbent J.R."/>
            <person name="Hutkins R."/>
            <person name="O'Sullivan D."/>
            <person name="Steele J."/>
            <person name="Unlu G."/>
            <person name="Saier M.H. Jr."/>
            <person name="Klaenhammer T."/>
            <person name="Richardson P."/>
            <person name="Kozyavkin S."/>
            <person name="Weimer B.C."/>
            <person name="Mills D.A."/>
        </authorList>
    </citation>
    <scope>NUCLEOTIDE SEQUENCE [LARGE SCALE GENOMIC DNA]</scope>
    <source>
        <strain>ATCC BAA-491 / LMD-9</strain>
    </source>
</reference>
<feature type="chain" id="PRO_0000313471" description="DNA ligase">
    <location>
        <begin position="1"/>
        <end position="652"/>
    </location>
</feature>
<feature type="domain" description="BRCT" evidence="1">
    <location>
        <begin position="577"/>
        <end position="652"/>
    </location>
</feature>
<feature type="active site" description="N6-AMP-lysine intermediate" evidence="1">
    <location>
        <position position="109"/>
    </location>
</feature>
<feature type="binding site" evidence="1">
    <location>
        <begin position="29"/>
        <end position="33"/>
    </location>
    <ligand>
        <name>NAD(+)</name>
        <dbReference type="ChEBI" id="CHEBI:57540"/>
    </ligand>
</feature>
<feature type="binding site" evidence="1">
    <location>
        <begin position="78"/>
        <end position="79"/>
    </location>
    <ligand>
        <name>NAD(+)</name>
        <dbReference type="ChEBI" id="CHEBI:57540"/>
    </ligand>
</feature>
<feature type="binding site" evidence="1">
    <location>
        <position position="107"/>
    </location>
    <ligand>
        <name>NAD(+)</name>
        <dbReference type="ChEBI" id="CHEBI:57540"/>
    </ligand>
</feature>
<feature type="binding site" evidence="1">
    <location>
        <position position="130"/>
    </location>
    <ligand>
        <name>NAD(+)</name>
        <dbReference type="ChEBI" id="CHEBI:57540"/>
    </ligand>
</feature>
<feature type="binding site" evidence="1">
    <location>
        <position position="164"/>
    </location>
    <ligand>
        <name>NAD(+)</name>
        <dbReference type="ChEBI" id="CHEBI:57540"/>
    </ligand>
</feature>
<feature type="binding site" evidence="1">
    <location>
        <position position="278"/>
    </location>
    <ligand>
        <name>NAD(+)</name>
        <dbReference type="ChEBI" id="CHEBI:57540"/>
    </ligand>
</feature>
<feature type="binding site" evidence="1">
    <location>
        <position position="302"/>
    </location>
    <ligand>
        <name>NAD(+)</name>
        <dbReference type="ChEBI" id="CHEBI:57540"/>
    </ligand>
</feature>
<feature type="binding site" evidence="1">
    <location>
        <position position="395"/>
    </location>
    <ligand>
        <name>Zn(2+)</name>
        <dbReference type="ChEBI" id="CHEBI:29105"/>
    </ligand>
</feature>
<feature type="binding site" evidence="1">
    <location>
        <position position="398"/>
    </location>
    <ligand>
        <name>Zn(2+)</name>
        <dbReference type="ChEBI" id="CHEBI:29105"/>
    </ligand>
</feature>
<feature type="binding site" evidence="1">
    <location>
        <position position="413"/>
    </location>
    <ligand>
        <name>Zn(2+)</name>
        <dbReference type="ChEBI" id="CHEBI:29105"/>
    </ligand>
</feature>
<feature type="binding site" evidence="1">
    <location>
        <position position="418"/>
    </location>
    <ligand>
        <name>Zn(2+)</name>
        <dbReference type="ChEBI" id="CHEBI:29105"/>
    </ligand>
</feature>
<accession>Q03JF6</accession>
<sequence length="652" mass="71976">MEKRMKELVDKLNQYAKEYYTEDNPSVSDAEYDKLYRELVTLEAEHPELVQADSPTHRVGGLVLDGFEKYQHEYPLYSLQDAFSREELDAFDKRIKSEFPNADYMAELKIDGLSISLTYVDGILQVGATRGDGSVGENITENVKRISDIPLKLDQPLNITVRGECYLPRAEFERINTQRQENGEAEFANPRNAAAGTLRQLDTKVVAERRLATFFYQEAGPTERLTQNDVLNEVAELGFSVNPRRIVTSSMDEIWDFIQAVGQDRDHLAYDIDGVVIKVNSLAMQEELGFTVKAPRWAIAYKFPAEEKEAKLLSVDWQVGRTGVVTPTANLTPVQLAGTTVSRATLHNVDYITEKDIRIGDTVIVYKAGDIIPAVLRVVESKRTTQEAMPVPSQCPSCGSGLLHFEDEVALRCINPSCPAQIKEGLIHFASRDAMNISGMGPSVVEKLFKAELVKEVADIYGLNSQDFLQLEGFKEKSAEKLYAAIQASKENSAEKLLYGLGIRHVGAKVSKQLLESFGTIKELASADVQAIAAVDGLGEVIAKSIQRYFAKEEAQVLLKELESYGVNLSYLGQKVTDDAILSGKTVVLTGKLEHLKRSEAKAKLEALGAKVTGSVSKKTDLVVAGSDAGSKLEKAQSLGIEVKDEAWLLDL</sequence>
<evidence type="ECO:0000255" key="1">
    <source>
        <dbReference type="HAMAP-Rule" id="MF_01588"/>
    </source>
</evidence>
<evidence type="ECO:0000305" key="2"/>
<proteinExistence type="inferred from homology"/>
<comment type="function">
    <text evidence="1">DNA ligase that catalyzes the formation of phosphodiester linkages between 5'-phosphoryl and 3'-hydroxyl groups in double-stranded DNA using NAD as a coenzyme and as the energy source for the reaction. It is essential for DNA replication and repair of damaged DNA.</text>
</comment>
<comment type="catalytic activity">
    <reaction evidence="1">
        <text>NAD(+) + (deoxyribonucleotide)n-3'-hydroxyl + 5'-phospho-(deoxyribonucleotide)m = (deoxyribonucleotide)n+m + AMP + beta-nicotinamide D-nucleotide.</text>
        <dbReference type="EC" id="6.5.1.2"/>
    </reaction>
</comment>
<comment type="cofactor">
    <cofactor evidence="1">
        <name>Mg(2+)</name>
        <dbReference type="ChEBI" id="CHEBI:18420"/>
    </cofactor>
    <cofactor evidence="1">
        <name>Mn(2+)</name>
        <dbReference type="ChEBI" id="CHEBI:29035"/>
    </cofactor>
</comment>
<comment type="similarity">
    <text evidence="1">Belongs to the NAD-dependent DNA ligase family. LigA subfamily.</text>
</comment>
<comment type="sequence caution" evidence="2">
    <conflict type="erroneous initiation">
        <sequence resource="EMBL-CDS" id="ABJ66666"/>
    </conflict>
</comment>
<organism>
    <name type="scientific">Streptococcus thermophilus (strain ATCC BAA-491 / LMD-9)</name>
    <dbReference type="NCBI Taxonomy" id="322159"/>
    <lineage>
        <taxon>Bacteria</taxon>
        <taxon>Bacillati</taxon>
        <taxon>Bacillota</taxon>
        <taxon>Bacilli</taxon>
        <taxon>Lactobacillales</taxon>
        <taxon>Streptococcaceae</taxon>
        <taxon>Streptococcus</taxon>
    </lineage>
</organism>
<keyword id="KW-0227">DNA damage</keyword>
<keyword id="KW-0234">DNA repair</keyword>
<keyword id="KW-0235">DNA replication</keyword>
<keyword id="KW-0436">Ligase</keyword>
<keyword id="KW-0460">Magnesium</keyword>
<keyword id="KW-0464">Manganese</keyword>
<keyword id="KW-0479">Metal-binding</keyword>
<keyword id="KW-0520">NAD</keyword>
<keyword id="KW-0862">Zinc</keyword>